<keyword id="KW-0067">ATP-binding</keyword>
<keyword id="KW-0460">Magnesium</keyword>
<keyword id="KW-0547">Nucleotide-binding</keyword>
<keyword id="KW-1185">Reference proteome</keyword>
<keyword id="KW-0808">Transferase</keyword>
<keyword id="KW-0819">tRNA processing</keyword>
<dbReference type="EC" id="2.5.1.75" evidence="1"/>
<dbReference type="EMBL" id="CP000233">
    <property type="protein sequence ID" value="ABD99364.1"/>
    <property type="molecule type" value="Genomic_DNA"/>
</dbReference>
<dbReference type="RefSeq" id="WP_011475815.1">
    <property type="nucleotide sequence ID" value="NC_007929.1"/>
</dbReference>
<dbReference type="RefSeq" id="YP_535447.1">
    <property type="nucleotide sequence ID" value="NC_007929.1"/>
</dbReference>
<dbReference type="SMR" id="Q1WUH1"/>
<dbReference type="STRING" id="362948.LSL_0555"/>
<dbReference type="KEGG" id="lsl:LSL_0555"/>
<dbReference type="PATRIC" id="fig|362948.14.peg.633"/>
<dbReference type="HOGENOM" id="CLU_032616_0_1_9"/>
<dbReference type="OrthoDB" id="9776390at2"/>
<dbReference type="Proteomes" id="UP000006559">
    <property type="component" value="Chromosome"/>
</dbReference>
<dbReference type="GO" id="GO:0005524">
    <property type="term" value="F:ATP binding"/>
    <property type="evidence" value="ECO:0007669"/>
    <property type="project" value="UniProtKB-UniRule"/>
</dbReference>
<dbReference type="GO" id="GO:0052381">
    <property type="term" value="F:tRNA dimethylallyltransferase activity"/>
    <property type="evidence" value="ECO:0007669"/>
    <property type="project" value="UniProtKB-UniRule"/>
</dbReference>
<dbReference type="GO" id="GO:0006400">
    <property type="term" value="P:tRNA modification"/>
    <property type="evidence" value="ECO:0007669"/>
    <property type="project" value="TreeGrafter"/>
</dbReference>
<dbReference type="Gene3D" id="1.10.20.140">
    <property type="match status" value="1"/>
</dbReference>
<dbReference type="Gene3D" id="3.40.50.300">
    <property type="entry name" value="P-loop containing nucleotide triphosphate hydrolases"/>
    <property type="match status" value="1"/>
</dbReference>
<dbReference type="HAMAP" id="MF_00185">
    <property type="entry name" value="IPP_trans"/>
    <property type="match status" value="1"/>
</dbReference>
<dbReference type="InterPro" id="IPR039657">
    <property type="entry name" value="Dimethylallyltransferase"/>
</dbReference>
<dbReference type="InterPro" id="IPR018022">
    <property type="entry name" value="IPT"/>
</dbReference>
<dbReference type="InterPro" id="IPR027417">
    <property type="entry name" value="P-loop_NTPase"/>
</dbReference>
<dbReference type="NCBIfam" id="TIGR00174">
    <property type="entry name" value="miaA"/>
    <property type="match status" value="1"/>
</dbReference>
<dbReference type="PANTHER" id="PTHR11088">
    <property type="entry name" value="TRNA DIMETHYLALLYLTRANSFERASE"/>
    <property type="match status" value="1"/>
</dbReference>
<dbReference type="PANTHER" id="PTHR11088:SF60">
    <property type="entry name" value="TRNA DIMETHYLALLYLTRANSFERASE"/>
    <property type="match status" value="1"/>
</dbReference>
<dbReference type="Pfam" id="PF01715">
    <property type="entry name" value="IPPT"/>
    <property type="match status" value="1"/>
</dbReference>
<dbReference type="SUPFAM" id="SSF52540">
    <property type="entry name" value="P-loop containing nucleoside triphosphate hydrolases"/>
    <property type="match status" value="2"/>
</dbReference>
<comment type="function">
    <text evidence="1">Catalyzes the transfer of a dimethylallyl group onto the adenine at position 37 in tRNAs that read codons beginning with uridine, leading to the formation of N6-(dimethylallyl)adenosine (i(6)A).</text>
</comment>
<comment type="catalytic activity">
    <reaction evidence="1">
        <text>adenosine(37) in tRNA + dimethylallyl diphosphate = N(6)-dimethylallyladenosine(37) in tRNA + diphosphate</text>
        <dbReference type="Rhea" id="RHEA:26482"/>
        <dbReference type="Rhea" id="RHEA-COMP:10162"/>
        <dbReference type="Rhea" id="RHEA-COMP:10375"/>
        <dbReference type="ChEBI" id="CHEBI:33019"/>
        <dbReference type="ChEBI" id="CHEBI:57623"/>
        <dbReference type="ChEBI" id="CHEBI:74411"/>
        <dbReference type="ChEBI" id="CHEBI:74415"/>
        <dbReference type="EC" id="2.5.1.75"/>
    </reaction>
</comment>
<comment type="cofactor">
    <cofactor evidence="1">
        <name>Mg(2+)</name>
        <dbReference type="ChEBI" id="CHEBI:18420"/>
    </cofactor>
</comment>
<comment type="subunit">
    <text evidence="1">Monomer.</text>
</comment>
<comment type="similarity">
    <text evidence="1">Belongs to the IPP transferase family.</text>
</comment>
<organism>
    <name type="scientific">Ligilactobacillus salivarius (strain UCC118)</name>
    <name type="common">Lactobacillus salivarius</name>
    <dbReference type="NCBI Taxonomy" id="362948"/>
    <lineage>
        <taxon>Bacteria</taxon>
        <taxon>Bacillati</taxon>
        <taxon>Bacillota</taxon>
        <taxon>Bacilli</taxon>
        <taxon>Lactobacillales</taxon>
        <taxon>Lactobacillaceae</taxon>
        <taxon>Ligilactobacillus</taxon>
    </lineage>
</organism>
<reference key="1">
    <citation type="journal article" date="2006" name="Proc. Natl. Acad. Sci. U.S.A.">
        <title>Multireplicon genome architecture of Lactobacillus salivarius.</title>
        <authorList>
            <person name="Claesson M.J."/>
            <person name="Li Y."/>
            <person name="Leahy S."/>
            <person name="Canchaya C."/>
            <person name="van Pijkeren J.P."/>
            <person name="Cerdeno-Tarraga A.M."/>
            <person name="Parkhill J."/>
            <person name="Flynn S."/>
            <person name="O'Sullivan G.C."/>
            <person name="Collins J.K."/>
            <person name="Higgins D."/>
            <person name="Shanahan F."/>
            <person name="Fitzgerald G.F."/>
            <person name="van Sinderen D."/>
            <person name="O'Toole P.W."/>
        </authorList>
    </citation>
    <scope>NUCLEOTIDE SEQUENCE [LARGE SCALE GENOMIC DNA]</scope>
    <source>
        <strain>UCC118</strain>
    </source>
</reference>
<gene>
    <name evidence="1" type="primary">miaA</name>
    <name type="ordered locus">LSL_0555</name>
</gene>
<name>MIAA_LIGS1</name>
<evidence type="ECO:0000255" key="1">
    <source>
        <dbReference type="HAMAP-Rule" id="MF_00185"/>
    </source>
</evidence>
<feature type="chain" id="PRO_0000377200" description="tRNA dimethylallyltransferase">
    <location>
        <begin position="1"/>
        <end position="307"/>
    </location>
</feature>
<feature type="region of interest" description="Interaction with substrate tRNA" evidence="1">
    <location>
        <begin position="35"/>
        <end position="38"/>
    </location>
</feature>
<feature type="binding site" evidence="1">
    <location>
        <begin position="10"/>
        <end position="17"/>
    </location>
    <ligand>
        <name>ATP</name>
        <dbReference type="ChEBI" id="CHEBI:30616"/>
    </ligand>
</feature>
<feature type="binding site" evidence="1">
    <location>
        <begin position="12"/>
        <end position="17"/>
    </location>
    <ligand>
        <name>substrate</name>
    </ligand>
</feature>
<feature type="site" description="Interaction with substrate tRNA" evidence="1">
    <location>
        <position position="101"/>
    </location>
</feature>
<feature type="site" description="Interaction with substrate tRNA" evidence="1">
    <location>
        <position position="127"/>
    </location>
</feature>
<protein>
    <recommendedName>
        <fullName evidence="1">tRNA dimethylallyltransferase</fullName>
        <ecNumber evidence="1">2.5.1.75</ecNumber>
    </recommendedName>
    <alternativeName>
        <fullName evidence="1">Dimethylallyl diphosphate:tRNA dimethylallyltransferase</fullName>
        <shortName evidence="1">DMAPP:tRNA dimethylallyltransferase</shortName>
        <shortName evidence="1">DMATase</shortName>
    </alternativeName>
    <alternativeName>
        <fullName evidence="1">Isopentenyl-diphosphate:tRNA isopentenyltransferase</fullName>
        <shortName evidence="1">IPP transferase</shortName>
        <shortName evidence="1">IPPT</shortName>
        <shortName evidence="1">IPTase</shortName>
    </alternativeName>
</protein>
<sequence length="307" mass="35442">MTQKVIVIVGPTAVGKTALSIDIAKKYKGQIISGDSMQVYRNLDIGTAKITPDEMGDIKHYMIDILQVQQRFSVADFIDNCRKDIKEIANDDNIPIIVGGTGFYLQALLDGYSLGGDTFDQLSIERRKKWQLFMEKNGKEKLWEELAKLDIVAARKIPINNFRRVIRALEVIEQTGRLFSEQHDESNEEFEPLLIGLNTQRSTLYERINKRVDIMIQTGLIEEAKYLYNLGGATLPAGKGIGYKEFYPYFDGEISKDEAIELVKRNSRRYAKRQLTWFRNKMNVVWFDLVNNPEDIKKIYKLIDDWI</sequence>
<proteinExistence type="inferred from homology"/>
<accession>Q1WUH1</accession>